<feature type="transit peptide" description="Mitochondrion" evidence="2">
    <location>
        <begin position="1"/>
        <end status="unknown"/>
    </location>
</feature>
<feature type="chain" id="PRO_0000030528" description="Large ribosomal subunit protein bL35m">
    <location>
        <begin status="unknown"/>
        <end position="178"/>
    </location>
</feature>
<evidence type="ECO:0000250" key="1"/>
<evidence type="ECO:0000255" key="2"/>
<evidence type="ECO:0000305" key="3"/>
<gene>
    <name type="primary">mRpL35</name>
    <name type="ORF">CG13410</name>
</gene>
<name>RM35_DROME</name>
<dbReference type="EMBL" id="AE014297">
    <property type="protein sequence ID" value="AAF55944.2"/>
    <property type="molecule type" value="Genomic_DNA"/>
</dbReference>
<dbReference type="EMBL" id="AY119133">
    <property type="protein sequence ID" value="AAM50993.1"/>
    <property type="molecule type" value="mRNA"/>
</dbReference>
<dbReference type="RefSeq" id="NP_651001.2">
    <property type="nucleotide sequence ID" value="NM_142744.3"/>
</dbReference>
<dbReference type="SMR" id="Q8MS27"/>
<dbReference type="BioGRID" id="67549">
    <property type="interactions" value="2"/>
</dbReference>
<dbReference type="FunCoup" id="Q8MS27">
    <property type="interactions" value="1017"/>
</dbReference>
<dbReference type="IntAct" id="Q8MS27">
    <property type="interactions" value="1"/>
</dbReference>
<dbReference type="STRING" id="7227.FBpp0083569"/>
<dbReference type="GlyGen" id="Q8MS27">
    <property type="glycosylation" value="2 sites"/>
</dbReference>
<dbReference type="PaxDb" id="7227-FBpp0083569"/>
<dbReference type="DNASU" id="42588"/>
<dbReference type="EnsemblMetazoa" id="FBtr0084171">
    <property type="protein sequence ID" value="FBpp0083569"/>
    <property type="gene ID" value="FBgn0038923"/>
</dbReference>
<dbReference type="GeneID" id="42588"/>
<dbReference type="KEGG" id="dme:Dmel_CG13410"/>
<dbReference type="AGR" id="FB:FBgn0038923"/>
<dbReference type="CTD" id="51318"/>
<dbReference type="FlyBase" id="FBgn0038923">
    <property type="gene designation" value="mRpL35"/>
</dbReference>
<dbReference type="VEuPathDB" id="VectorBase:FBgn0038923"/>
<dbReference type="eggNOG" id="KOG4316">
    <property type="taxonomic scope" value="Eukaryota"/>
</dbReference>
<dbReference type="GeneTree" id="ENSGT00390000007547"/>
<dbReference type="HOGENOM" id="CLU_123951_1_0_1"/>
<dbReference type="InParanoid" id="Q8MS27"/>
<dbReference type="OMA" id="DPYKPYH"/>
<dbReference type="OrthoDB" id="5847109at2759"/>
<dbReference type="PhylomeDB" id="Q8MS27"/>
<dbReference type="Reactome" id="R-DME-5389840">
    <property type="pathway name" value="Mitochondrial translation elongation"/>
</dbReference>
<dbReference type="Reactome" id="R-DME-5419276">
    <property type="pathway name" value="Mitochondrial translation termination"/>
</dbReference>
<dbReference type="BioGRID-ORCS" id="42588">
    <property type="hits" value="0 hits in 1 CRISPR screen"/>
</dbReference>
<dbReference type="GenomeRNAi" id="42588"/>
<dbReference type="PRO" id="PR:Q8MS27"/>
<dbReference type="Proteomes" id="UP000000803">
    <property type="component" value="Chromosome 3R"/>
</dbReference>
<dbReference type="Bgee" id="FBgn0038923">
    <property type="expression patterns" value="Expressed in adult enteroendocrine precursor cell in adult midgut (Drosophila) and 121 other cell types or tissues"/>
</dbReference>
<dbReference type="GO" id="GO:0005762">
    <property type="term" value="C:mitochondrial large ribosomal subunit"/>
    <property type="evidence" value="ECO:0000250"/>
    <property type="project" value="FlyBase"/>
</dbReference>
<dbReference type="GO" id="GO:0005739">
    <property type="term" value="C:mitochondrion"/>
    <property type="evidence" value="ECO:0000318"/>
    <property type="project" value="GO_Central"/>
</dbReference>
<dbReference type="GO" id="GO:0003735">
    <property type="term" value="F:structural constituent of ribosome"/>
    <property type="evidence" value="ECO:0000304"/>
    <property type="project" value="FlyBase"/>
</dbReference>
<dbReference type="GO" id="GO:0032543">
    <property type="term" value="P:mitochondrial translation"/>
    <property type="evidence" value="ECO:0000304"/>
    <property type="project" value="FlyBase"/>
</dbReference>
<dbReference type="Gene3D" id="4.10.410.60">
    <property type="match status" value="1"/>
</dbReference>
<dbReference type="InterPro" id="IPR021137">
    <property type="entry name" value="Ribosomal_bL35-like"/>
</dbReference>
<dbReference type="InterPro" id="IPR037229">
    <property type="entry name" value="Ribosomal_bL35_sf"/>
</dbReference>
<dbReference type="InterPro" id="IPR019338">
    <property type="entry name" value="Ribosomal_bL35m"/>
</dbReference>
<dbReference type="PANTHER" id="PTHR15909">
    <property type="entry name" value="39S RIBOSOMAL PROTEIN L35, MITOCHONDRIAL"/>
    <property type="match status" value="1"/>
</dbReference>
<dbReference type="PANTHER" id="PTHR15909:SF0">
    <property type="entry name" value="LARGE RIBOSOMAL SUBUNIT PROTEIN BL35M"/>
    <property type="match status" value="1"/>
</dbReference>
<dbReference type="Pfam" id="PF01632">
    <property type="entry name" value="Ribosomal_L35p"/>
    <property type="match status" value="1"/>
</dbReference>
<dbReference type="SUPFAM" id="SSF143034">
    <property type="entry name" value="L35p-like"/>
    <property type="match status" value="1"/>
</dbReference>
<proteinExistence type="evidence at transcript level"/>
<protein>
    <recommendedName>
        <fullName evidence="3">Large ribosomal subunit protein bL35m</fullName>
    </recommendedName>
    <alternativeName>
        <fullName>39S ribosomal protein L35, mitochondrial</fullName>
        <shortName>L35mt</shortName>
        <shortName>MRP-L35</shortName>
    </alternativeName>
</protein>
<sequence>MLRTFVTSALRSVCRQSPAASSLVPLVQRTQRATLMTLSRPCLLPTPSLASPAHHQLLQLPGVLAATGTPSNTRNVTKFSLVKGKRKTVKAVLKRFKRLDWGAWIRTHSGRQKKLFKKSAALRRRLKQHVFTNATQSWLLDKMVTSYWRRPKHFINDPYKPYHSRNEYYATQSKTFKV</sequence>
<reference key="1">
    <citation type="journal article" date="2000" name="Science">
        <title>The genome sequence of Drosophila melanogaster.</title>
        <authorList>
            <person name="Adams M.D."/>
            <person name="Celniker S.E."/>
            <person name="Holt R.A."/>
            <person name="Evans C.A."/>
            <person name="Gocayne J.D."/>
            <person name="Amanatides P.G."/>
            <person name="Scherer S.E."/>
            <person name="Li P.W."/>
            <person name="Hoskins R.A."/>
            <person name="Galle R.F."/>
            <person name="George R.A."/>
            <person name="Lewis S.E."/>
            <person name="Richards S."/>
            <person name="Ashburner M."/>
            <person name="Henderson S.N."/>
            <person name="Sutton G.G."/>
            <person name="Wortman J.R."/>
            <person name="Yandell M.D."/>
            <person name="Zhang Q."/>
            <person name="Chen L.X."/>
            <person name="Brandon R.C."/>
            <person name="Rogers Y.-H.C."/>
            <person name="Blazej R.G."/>
            <person name="Champe M."/>
            <person name="Pfeiffer B.D."/>
            <person name="Wan K.H."/>
            <person name="Doyle C."/>
            <person name="Baxter E.G."/>
            <person name="Helt G."/>
            <person name="Nelson C.R."/>
            <person name="Miklos G.L.G."/>
            <person name="Abril J.F."/>
            <person name="Agbayani A."/>
            <person name="An H.-J."/>
            <person name="Andrews-Pfannkoch C."/>
            <person name="Baldwin D."/>
            <person name="Ballew R.M."/>
            <person name="Basu A."/>
            <person name="Baxendale J."/>
            <person name="Bayraktaroglu L."/>
            <person name="Beasley E.M."/>
            <person name="Beeson K.Y."/>
            <person name="Benos P.V."/>
            <person name="Berman B.P."/>
            <person name="Bhandari D."/>
            <person name="Bolshakov S."/>
            <person name="Borkova D."/>
            <person name="Botchan M.R."/>
            <person name="Bouck J."/>
            <person name="Brokstein P."/>
            <person name="Brottier P."/>
            <person name="Burtis K.C."/>
            <person name="Busam D.A."/>
            <person name="Butler H."/>
            <person name="Cadieu E."/>
            <person name="Center A."/>
            <person name="Chandra I."/>
            <person name="Cherry J.M."/>
            <person name="Cawley S."/>
            <person name="Dahlke C."/>
            <person name="Davenport L.B."/>
            <person name="Davies P."/>
            <person name="de Pablos B."/>
            <person name="Delcher A."/>
            <person name="Deng Z."/>
            <person name="Mays A.D."/>
            <person name="Dew I."/>
            <person name="Dietz S.M."/>
            <person name="Dodson K."/>
            <person name="Doup L.E."/>
            <person name="Downes M."/>
            <person name="Dugan-Rocha S."/>
            <person name="Dunkov B.C."/>
            <person name="Dunn P."/>
            <person name="Durbin K.J."/>
            <person name="Evangelista C.C."/>
            <person name="Ferraz C."/>
            <person name="Ferriera S."/>
            <person name="Fleischmann W."/>
            <person name="Fosler C."/>
            <person name="Gabrielian A.E."/>
            <person name="Garg N.S."/>
            <person name="Gelbart W.M."/>
            <person name="Glasser K."/>
            <person name="Glodek A."/>
            <person name="Gong F."/>
            <person name="Gorrell J.H."/>
            <person name="Gu Z."/>
            <person name="Guan P."/>
            <person name="Harris M."/>
            <person name="Harris N.L."/>
            <person name="Harvey D.A."/>
            <person name="Heiman T.J."/>
            <person name="Hernandez J.R."/>
            <person name="Houck J."/>
            <person name="Hostin D."/>
            <person name="Houston K.A."/>
            <person name="Howland T.J."/>
            <person name="Wei M.-H."/>
            <person name="Ibegwam C."/>
            <person name="Jalali M."/>
            <person name="Kalush F."/>
            <person name="Karpen G.H."/>
            <person name="Ke Z."/>
            <person name="Kennison J.A."/>
            <person name="Ketchum K.A."/>
            <person name="Kimmel B.E."/>
            <person name="Kodira C.D."/>
            <person name="Kraft C.L."/>
            <person name="Kravitz S."/>
            <person name="Kulp D."/>
            <person name="Lai Z."/>
            <person name="Lasko P."/>
            <person name="Lei Y."/>
            <person name="Levitsky A.A."/>
            <person name="Li J.H."/>
            <person name="Li Z."/>
            <person name="Liang Y."/>
            <person name="Lin X."/>
            <person name="Liu X."/>
            <person name="Mattei B."/>
            <person name="McIntosh T.C."/>
            <person name="McLeod M.P."/>
            <person name="McPherson D."/>
            <person name="Merkulov G."/>
            <person name="Milshina N.V."/>
            <person name="Mobarry C."/>
            <person name="Morris J."/>
            <person name="Moshrefi A."/>
            <person name="Mount S.M."/>
            <person name="Moy M."/>
            <person name="Murphy B."/>
            <person name="Murphy L."/>
            <person name="Muzny D.M."/>
            <person name="Nelson D.L."/>
            <person name="Nelson D.R."/>
            <person name="Nelson K.A."/>
            <person name="Nixon K."/>
            <person name="Nusskern D.R."/>
            <person name="Pacleb J.M."/>
            <person name="Palazzolo M."/>
            <person name="Pittman G.S."/>
            <person name="Pan S."/>
            <person name="Pollard J."/>
            <person name="Puri V."/>
            <person name="Reese M.G."/>
            <person name="Reinert K."/>
            <person name="Remington K."/>
            <person name="Saunders R.D.C."/>
            <person name="Scheeler F."/>
            <person name="Shen H."/>
            <person name="Shue B.C."/>
            <person name="Siden-Kiamos I."/>
            <person name="Simpson M."/>
            <person name="Skupski M.P."/>
            <person name="Smith T.J."/>
            <person name="Spier E."/>
            <person name="Spradling A.C."/>
            <person name="Stapleton M."/>
            <person name="Strong R."/>
            <person name="Sun E."/>
            <person name="Svirskas R."/>
            <person name="Tector C."/>
            <person name="Turner R."/>
            <person name="Venter E."/>
            <person name="Wang A.H."/>
            <person name="Wang X."/>
            <person name="Wang Z.-Y."/>
            <person name="Wassarman D.A."/>
            <person name="Weinstock G.M."/>
            <person name="Weissenbach J."/>
            <person name="Williams S.M."/>
            <person name="Woodage T."/>
            <person name="Worley K.C."/>
            <person name="Wu D."/>
            <person name="Yang S."/>
            <person name="Yao Q.A."/>
            <person name="Ye J."/>
            <person name="Yeh R.-F."/>
            <person name="Zaveri J.S."/>
            <person name="Zhan M."/>
            <person name="Zhang G."/>
            <person name="Zhao Q."/>
            <person name="Zheng L."/>
            <person name="Zheng X.H."/>
            <person name="Zhong F.N."/>
            <person name="Zhong W."/>
            <person name="Zhou X."/>
            <person name="Zhu S.C."/>
            <person name="Zhu X."/>
            <person name="Smith H.O."/>
            <person name="Gibbs R.A."/>
            <person name="Myers E.W."/>
            <person name="Rubin G.M."/>
            <person name="Venter J.C."/>
        </authorList>
    </citation>
    <scope>NUCLEOTIDE SEQUENCE [LARGE SCALE GENOMIC DNA]</scope>
    <source>
        <strain>Berkeley</strain>
    </source>
</reference>
<reference key="2">
    <citation type="journal article" date="2002" name="Genome Biol.">
        <title>Annotation of the Drosophila melanogaster euchromatic genome: a systematic review.</title>
        <authorList>
            <person name="Misra S."/>
            <person name="Crosby M.A."/>
            <person name="Mungall C.J."/>
            <person name="Matthews B.B."/>
            <person name="Campbell K.S."/>
            <person name="Hradecky P."/>
            <person name="Huang Y."/>
            <person name="Kaminker J.S."/>
            <person name="Millburn G.H."/>
            <person name="Prochnik S.E."/>
            <person name="Smith C.D."/>
            <person name="Tupy J.L."/>
            <person name="Whitfield E.J."/>
            <person name="Bayraktaroglu L."/>
            <person name="Berman B.P."/>
            <person name="Bettencourt B.R."/>
            <person name="Celniker S.E."/>
            <person name="de Grey A.D.N.J."/>
            <person name="Drysdale R.A."/>
            <person name="Harris N.L."/>
            <person name="Richter J."/>
            <person name="Russo S."/>
            <person name="Schroeder A.J."/>
            <person name="Shu S.Q."/>
            <person name="Stapleton M."/>
            <person name="Yamada C."/>
            <person name="Ashburner M."/>
            <person name="Gelbart W.M."/>
            <person name="Rubin G.M."/>
            <person name="Lewis S.E."/>
        </authorList>
    </citation>
    <scope>GENOME REANNOTATION</scope>
    <source>
        <strain>Berkeley</strain>
    </source>
</reference>
<reference key="3">
    <citation type="journal article" date="2002" name="Genome Biol.">
        <title>A Drosophila full-length cDNA resource.</title>
        <authorList>
            <person name="Stapleton M."/>
            <person name="Carlson J.W."/>
            <person name="Brokstein P."/>
            <person name="Yu C."/>
            <person name="Champe M."/>
            <person name="George R.A."/>
            <person name="Guarin H."/>
            <person name="Kronmiller B."/>
            <person name="Pacleb J.M."/>
            <person name="Park S."/>
            <person name="Wan K.H."/>
            <person name="Rubin G.M."/>
            <person name="Celniker S.E."/>
        </authorList>
    </citation>
    <scope>NUCLEOTIDE SEQUENCE [LARGE SCALE MRNA]</scope>
    <source>
        <strain>Berkeley</strain>
        <tissue>Embryo</tissue>
    </source>
</reference>
<comment type="subcellular location">
    <subcellularLocation>
        <location evidence="1">Mitochondrion</location>
    </subcellularLocation>
</comment>
<comment type="similarity">
    <text evidence="3">Belongs to the bacterial ribosomal protein bL35 family.</text>
</comment>
<accession>Q8MS27</accession>
<accession>Q9VD57</accession>
<keyword id="KW-0496">Mitochondrion</keyword>
<keyword id="KW-1185">Reference proteome</keyword>
<keyword id="KW-0687">Ribonucleoprotein</keyword>
<keyword id="KW-0689">Ribosomal protein</keyword>
<keyword id="KW-0809">Transit peptide</keyword>
<organism>
    <name type="scientific">Drosophila melanogaster</name>
    <name type="common">Fruit fly</name>
    <dbReference type="NCBI Taxonomy" id="7227"/>
    <lineage>
        <taxon>Eukaryota</taxon>
        <taxon>Metazoa</taxon>
        <taxon>Ecdysozoa</taxon>
        <taxon>Arthropoda</taxon>
        <taxon>Hexapoda</taxon>
        <taxon>Insecta</taxon>
        <taxon>Pterygota</taxon>
        <taxon>Neoptera</taxon>
        <taxon>Endopterygota</taxon>
        <taxon>Diptera</taxon>
        <taxon>Brachycera</taxon>
        <taxon>Muscomorpha</taxon>
        <taxon>Ephydroidea</taxon>
        <taxon>Drosophilidae</taxon>
        <taxon>Drosophila</taxon>
        <taxon>Sophophora</taxon>
    </lineage>
</organism>